<organism>
    <name type="scientific">Leptospira biflexa serovar Patoc (strain Patoc 1 / ATCC 23582 / Paris)</name>
    <dbReference type="NCBI Taxonomy" id="456481"/>
    <lineage>
        <taxon>Bacteria</taxon>
        <taxon>Pseudomonadati</taxon>
        <taxon>Spirochaetota</taxon>
        <taxon>Spirochaetia</taxon>
        <taxon>Leptospirales</taxon>
        <taxon>Leptospiraceae</taxon>
        <taxon>Leptospira</taxon>
    </lineage>
</organism>
<reference key="1">
    <citation type="journal article" date="2008" name="PLoS ONE">
        <title>Genome sequence of the saprophyte Leptospira biflexa provides insights into the evolution of Leptospira and the pathogenesis of leptospirosis.</title>
        <authorList>
            <person name="Picardeau M."/>
            <person name="Bulach D.M."/>
            <person name="Bouchier C."/>
            <person name="Zuerner R.L."/>
            <person name="Zidane N."/>
            <person name="Wilson P.J."/>
            <person name="Creno S."/>
            <person name="Kuczek E.S."/>
            <person name="Bommezzadri S."/>
            <person name="Davis J.C."/>
            <person name="McGrath A."/>
            <person name="Johnson M.J."/>
            <person name="Boursaux-Eude C."/>
            <person name="Seemann T."/>
            <person name="Rouy Z."/>
            <person name="Coppel R.L."/>
            <person name="Rood J.I."/>
            <person name="Lajus A."/>
            <person name="Davies J.K."/>
            <person name="Medigue C."/>
            <person name="Adler B."/>
        </authorList>
    </citation>
    <scope>NUCLEOTIDE SEQUENCE [LARGE SCALE GENOMIC DNA]</scope>
    <source>
        <strain>Patoc 1 / ATCC 23582 / Paris</strain>
    </source>
</reference>
<comment type="catalytic activity">
    <reaction evidence="1">
        <text>1-(5-phospho-beta-D-ribosyl)-ATP + H2O = 1-(5-phospho-beta-D-ribosyl)-5'-AMP + diphosphate + H(+)</text>
        <dbReference type="Rhea" id="RHEA:22828"/>
        <dbReference type="ChEBI" id="CHEBI:15377"/>
        <dbReference type="ChEBI" id="CHEBI:15378"/>
        <dbReference type="ChEBI" id="CHEBI:33019"/>
        <dbReference type="ChEBI" id="CHEBI:59457"/>
        <dbReference type="ChEBI" id="CHEBI:73183"/>
        <dbReference type="EC" id="3.6.1.31"/>
    </reaction>
</comment>
<comment type="pathway">
    <text evidence="1">Amino-acid biosynthesis; L-histidine biosynthesis; L-histidine from 5-phospho-alpha-D-ribose 1-diphosphate: step 2/9.</text>
</comment>
<comment type="subcellular location">
    <subcellularLocation>
        <location evidence="1">Cytoplasm</location>
    </subcellularLocation>
</comment>
<comment type="similarity">
    <text evidence="1">Belongs to the PRA-PH family.</text>
</comment>
<sequence>MEFLLKLEDLLRKRKEELPEKSYTAELFRDGVDRILKKIGEEAGEVIIAAKNPNEKELIHEIADLIFHLEVLMVEKGISLTTIAKELEKRHS</sequence>
<proteinExistence type="inferred from homology"/>
<keyword id="KW-0028">Amino-acid biosynthesis</keyword>
<keyword id="KW-0067">ATP-binding</keyword>
<keyword id="KW-0963">Cytoplasm</keyword>
<keyword id="KW-0368">Histidine biosynthesis</keyword>
<keyword id="KW-0378">Hydrolase</keyword>
<keyword id="KW-0547">Nucleotide-binding</keyword>
<keyword id="KW-1185">Reference proteome</keyword>
<accession>B0SMB9</accession>
<protein>
    <recommendedName>
        <fullName evidence="1">Phosphoribosyl-ATP pyrophosphatase</fullName>
        <shortName evidence="1">PRA-PH</shortName>
        <ecNumber evidence="1">3.6.1.31</ecNumber>
    </recommendedName>
</protein>
<name>HIS2_LEPBP</name>
<feature type="chain" id="PRO_1000190380" description="Phosphoribosyl-ATP pyrophosphatase">
    <location>
        <begin position="1"/>
        <end position="92"/>
    </location>
</feature>
<evidence type="ECO:0000255" key="1">
    <source>
        <dbReference type="HAMAP-Rule" id="MF_01020"/>
    </source>
</evidence>
<dbReference type="EC" id="3.6.1.31" evidence="1"/>
<dbReference type="EMBL" id="CP000786">
    <property type="protein sequence ID" value="ABZ97063.1"/>
    <property type="molecule type" value="Genomic_DNA"/>
</dbReference>
<dbReference type="RefSeq" id="WP_012387946.1">
    <property type="nucleotide sequence ID" value="NC_010602.1"/>
</dbReference>
<dbReference type="SMR" id="B0SMB9"/>
<dbReference type="STRING" id="456481.LEPBI_I0939"/>
<dbReference type="KEGG" id="lbi:LEPBI_I0939"/>
<dbReference type="HOGENOM" id="CLU_123337_0_0_12"/>
<dbReference type="OrthoDB" id="9795769at2"/>
<dbReference type="BioCyc" id="LBIF456481:LEPBI_RS04605-MONOMER"/>
<dbReference type="UniPathway" id="UPA00031">
    <property type="reaction ID" value="UER00007"/>
</dbReference>
<dbReference type="Proteomes" id="UP000001847">
    <property type="component" value="Chromosome I"/>
</dbReference>
<dbReference type="GO" id="GO:0005737">
    <property type="term" value="C:cytoplasm"/>
    <property type="evidence" value="ECO:0007669"/>
    <property type="project" value="UniProtKB-SubCell"/>
</dbReference>
<dbReference type="GO" id="GO:0005524">
    <property type="term" value="F:ATP binding"/>
    <property type="evidence" value="ECO:0007669"/>
    <property type="project" value="UniProtKB-KW"/>
</dbReference>
<dbReference type="GO" id="GO:0004636">
    <property type="term" value="F:phosphoribosyl-ATP diphosphatase activity"/>
    <property type="evidence" value="ECO:0007669"/>
    <property type="project" value="UniProtKB-UniRule"/>
</dbReference>
<dbReference type="GO" id="GO:0000105">
    <property type="term" value="P:L-histidine biosynthetic process"/>
    <property type="evidence" value="ECO:0007669"/>
    <property type="project" value="UniProtKB-UniRule"/>
</dbReference>
<dbReference type="CDD" id="cd11534">
    <property type="entry name" value="NTP-PPase_HisIE_like"/>
    <property type="match status" value="1"/>
</dbReference>
<dbReference type="FunFam" id="1.10.287.1080:FF:000002">
    <property type="entry name" value="Histidine biosynthesis bifunctional protein HisIE"/>
    <property type="match status" value="1"/>
</dbReference>
<dbReference type="Gene3D" id="1.10.287.1080">
    <property type="entry name" value="MazG-like"/>
    <property type="match status" value="1"/>
</dbReference>
<dbReference type="HAMAP" id="MF_01020">
    <property type="entry name" value="HisE"/>
    <property type="match status" value="1"/>
</dbReference>
<dbReference type="InterPro" id="IPR008179">
    <property type="entry name" value="HisE"/>
</dbReference>
<dbReference type="InterPro" id="IPR021130">
    <property type="entry name" value="PRib-ATP_PPHydrolase-like"/>
</dbReference>
<dbReference type="NCBIfam" id="TIGR03188">
    <property type="entry name" value="histidine_hisI"/>
    <property type="match status" value="1"/>
</dbReference>
<dbReference type="PANTHER" id="PTHR42945">
    <property type="entry name" value="HISTIDINE BIOSYNTHESIS BIFUNCTIONAL PROTEIN"/>
    <property type="match status" value="1"/>
</dbReference>
<dbReference type="PANTHER" id="PTHR42945:SF9">
    <property type="entry name" value="HISTIDINE BIOSYNTHESIS BIFUNCTIONAL PROTEIN HISIE"/>
    <property type="match status" value="1"/>
</dbReference>
<dbReference type="Pfam" id="PF01503">
    <property type="entry name" value="PRA-PH"/>
    <property type="match status" value="1"/>
</dbReference>
<dbReference type="SUPFAM" id="SSF101386">
    <property type="entry name" value="all-alpha NTP pyrophosphatases"/>
    <property type="match status" value="1"/>
</dbReference>
<gene>
    <name evidence="1" type="primary">hisE</name>
    <name type="ordered locus">LEPBI_I0939</name>
</gene>